<organism>
    <name type="scientific">Mycobacterium bovis (strain BCG / Pasteur 1173P2)</name>
    <dbReference type="NCBI Taxonomy" id="410289"/>
    <lineage>
        <taxon>Bacteria</taxon>
        <taxon>Bacillati</taxon>
        <taxon>Actinomycetota</taxon>
        <taxon>Actinomycetes</taxon>
        <taxon>Mycobacteriales</taxon>
        <taxon>Mycobacteriaceae</taxon>
        <taxon>Mycobacterium</taxon>
        <taxon>Mycobacterium tuberculosis complex</taxon>
    </lineage>
</organism>
<keyword id="KW-0067">ATP-binding</keyword>
<keyword id="KW-0963">Cytoplasm</keyword>
<keyword id="KW-0418">Kinase</keyword>
<keyword id="KW-0545">Nucleotide biosynthesis</keyword>
<keyword id="KW-0547">Nucleotide-binding</keyword>
<keyword id="KW-0808">Transferase</keyword>
<evidence type="ECO:0000255" key="1">
    <source>
        <dbReference type="HAMAP-Rule" id="MF_00235"/>
    </source>
</evidence>
<gene>
    <name evidence="1" type="primary">adk</name>
    <name type="ordered locus">BCG_0783</name>
</gene>
<comment type="function">
    <text evidence="1">Catalyzes the reversible transfer of the terminal phosphate group between ATP and AMP. Plays an important role in cellular energy homeostasis and in adenine nucleotide metabolism.</text>
</comment>
<comment type="catalytic activity">
    <reaction evidence="1">
        <text>AMP + ATP = 2 ADP</text>
        <dbReference type="Rhea" id="RHEA:12973"/>
        <dbReference type="ChEBI" id="CHEBI:30616"/>
        <dbReference type="ChEBI" id="CHEBI:456215"/>
        <dbReference type="ChEBI" id="CHEBI:456216"/>
        <dbReference type="EC" id="2.7.4.3"/>
    </reaction>
</comment>
<comment type="pathway">
    <text evidence="1">Purine metabolism; AMP biosynthesis via salvage pathway; AMP from ADP: step 1/1.</text>
</comment>
<comment type="subunit">
    <text evidence="1">Monomer.</text>
</comment>
<comment type="subcellular location">
    <subcellularLocation>
        <location evidence="1">Cytoplasm</location>
    </subcellularLocation>
</comment>
<comment type="domain">
    <text evidence="1">Consists of three domains, a large central CORE domain and two small peripheral domains, NMPbind and LID, which undergo movements during catalysis. The LID domain closes over the site of phosphoryl transfer upon ATP binding. Assembling and dissambling the active center during each catalytic cycle provides an effective means to prevent ATP hydrolysis.</text>
</comment>
<comment type="similarity">
    <text evidence="1">Belongs to the adenylate kinase family.</text>
</comment>
<dbReference type="EC" id="2.7.4.3" evidence="1"/>
<dbReference type="EMBL" id="AM408590">
    <property type="protein sequence ID" value="CAL70769.1"/>
    <property type="molecule type" value="Genomic_DNA"/>
</dbReference>
<dbReference type="RefSeq" id="WP_003403726.1">
    <property type="nucleotide sequence ID" value="NC_008769.1"/>
</dbReference>
<dbReference type="BMRB" id="A1KGL4"/>
<dbReference type="SMR" id="A1KGL4"/>
<dbReference type="KEGG" id="mbb:BCG_0783"/>
<dbReference type="HOGENOM" id="CLU_032354_4_1_11"/>
<dbReference type="UniPathway" id="UPA00588">
    <property type="reaction ID" value="UER00649"/>
</dbReference>
<dbReference type="Proteomes" id="UP000001472">
    <property type="component" value="Chromosome"/>
</dbReference>
<dbReference type="GO" id="GO:0005737">
    <property type="term" value="C:cytoplasm"/>
    <property type="evidence" value="ECO:0007669"/>
    <property type="project" value="UniProtKB-SubCell"/>
</dbReference>
<dbReference type="GO" id="GO:0004017">
    <property type="term" value="F:adenylate kinase activity"/>
    <property type="evidence" value="ECO:0007669"/>
    <property type="project" value="UniProtKB-UniRule"/>
</dbReference>
<dbReference type="GO" id="GO:0005524">
    <property type="term" value="F:ATP binding"/>
    <property type="evidence" value="ECO:0007669"/>
    <property type="project" value="UniProtKB-UniRule"/>
</dbReference>
<dbReference type="GO" id="GO:0044209">
    <property type="term" value="P:AMP salvage"/>
    <property type="evidence" value="ECO:0007669"/>
    <property type="project" value="UniProtKB-UniRule"/>
</dbReference>
<dbReference type="CDD" id="cd01428">
    <property type="entry name" value="ADK"/>
    <property type="match status" value="1"/>
</dbReference>
<dbReference type="FunFam" id="3.40.50.300:FF:002170">
    <property type="entry name" value="Adenylate kinase"/>
    <property type="match status" value="1"/>
</dbReference>
<dbReference type="Gene3D" id="3.40.50.300">
    <property type="entry name" value="P-loop containing nucleotide triphosphate hydrolases"/>
    <property type="match status" value="1"/>
</dbReference>
<dbReference type="HAMAP" id="MF_00235">
    <property type="entry name" value="Adenylate_kinase_Adk"/>
    <property type="match status" value="1"/>
</dbReference>
<dbReference type="InterPro" id="IPR000850">
    <property type="entry name" value="Adenylat/UMP-CMP_kin"/>
</dbReference>
<dbReference type="InterPro" id="IPR033690">
    <property type="entry name" value="Adenylat_kinase_CS"/>
</dbReference>
<dbReference type="InterPro" id="IPR027417">
    <property type="entry name" value="P-loop_NTPase"/>
</dbReference>
<dbReference type="NCBIfam" id="NF001381">
    <property type="entry name" value="PRK00279.1-3"/>
    <property type="match status" value="1"/>
</dbReference>
<dbReference type="NCBIfam" id="NF011100">
    <property type="entry name" value="PRK14527.1"/>
    <property type="match status" value="1"/>
</dbReference>
<dbReference type="NCBIfam" id="NF011104">
    <property type="entry name" value="PRK14531.1"/>
    <property type="match status" value="1"/>
</dbReference>
<dbReference type="NCBIfam" id="NF011105">
    <property type="entry name" value="PRK14532.1"/>
    <property type="match status" value="1"/>
</dbReference>
<dbReference type="PANTHER" id="PTHR23359">
    <property type="entry name" value="NUCLEOTIDE KINASE"/>
    <property type="match status" value="1"/>
</dbReference>
<dbReference type="Pfam" id="PF00406">
    <property type="entry name" value="ADK"/>
    <property type="match status" value="1"/>
</dbReference>
<dbReference type="PRINTS" id="PR00094">
    <property type="entry name" value="ADENYLTKNASE"/>
</dbReference>
<dbReference type="SUPFAM" id="SSF52540">
    <property type="entry name" value="P-loop containing nucleoside triphosphate hydrolases"/>
    <property type="match status" value="1"/>
</dbReference>
<dbReference type="PROSITE" id="PS00113">
    <property type="entry name" value="ADENYLATE_KINASE"/>
    <property type="match status" value="1"/>
</dbReference>
<sequence length="181" mass="20125">MRVLLLGPPGAGKGTQAVKLAEKLGIPQISTGELFRRNIEEGTKLGVEAKRYLDAGDLVPSDLTNELVDDRLNNPDAANGFILDGYPRSVEQAKALHEMLERRGTDIDAVLEFRVSEEVLLERLKGRGRADDTDDVILNRMKVYRDETAPLLEYYRDQLKTVDAVGTMDEVFARALRALGK</sequence>
<reference key="1">
    <citation type="journal article" date="2007" name="Proc. Natl. Acad. Sci. U.S.A.">
        <title>Genome plasticity of BCG and impact on vaccine efficacy.</title>
        <authorList>
            <person name="Brosch R."/>
            <person name="Gordon S.V."/>
            <person name="Garnier T."/>
            <person name="Eiglmeier K."/>
            <person name="Frigui W."/>
            <person name="Valenti P."/>
            <person name="Dos Santos S."/>
            <person name="Duthoy S."/>
            <person name="Lacroix C."/>
            <person name="Garcia-Pelayo C."/>
            <person name="Inwald J.K."/>
            <person name="Golby P."/>
            <person name="Garcia J.N."/>
            <person name="Hewinson R.G."/>
            <person name="Behr M.A."/>
            <person name="Quail M.A."/>
            <person name="Churcher C."/>
            <person name="Barrell B.G."/>
            <person name="Parkhill J."/>
            <person name="Cole S.T."/>
        </authorList>
    </citation>
    <scope>NUCLEOTIDE SEQUENCE [LARGE SCALE GENOMIC DNA]</scope>
    <source>
        <strain>BCG / Pasteur 1173P2</strain>
    </source>
</reference>
<accession>A1KGL4</accession>
<feature type="chain" id="PRO_1000058854" description="Adenylate kinase">
    <location>
        <begin position="1"/>
        <end position="181"/>
    </location>
</feature>
<feature type="region of interest" description="NMP" evidence="1">
    <location>
        <begin position="30"/>
        <end position="59"/>
    </location>
</feature>
<feature type="region of interest" description="LID" evidence="1">
    <location>
        <begin position="126"/>
        <end position="132"/>
    </location>
</feature>
<feature type="binding site" evidence="1">
    <location>
        <begin position="10"/>
        <end position="15"/>
    </location>
    <ligand>
        <name>ATP</name>
        <dbReference type="ChEBI" id="CHEBI:30616"/>
    </ligand>
</feature>
<feature type="binding site" evidence="1">
    <location>
        <position position="31"/>
    </location>
    <ligand>
        <name>AMP</name>
        <dbReference type="ChEBI" id="CHEBI:456215"/>
    </ligand>
</feature>
<feature type="binding site" evidence="1">
    <location>
        <position position="36"/>
    </location>
    <ligand>
        <name>AMP</name>
        <dbReference type="ChEBI" id="CHEBI:456215"/>
    </ligand>
</feature>
<feature type="binding site" evidence="1">
    <location>
        <begin position="57"/>
        <end position="59"/>
    </location>
    <ligand>
        <name>AMP</name>
        <dbReference type="ChEBI" id="CHEBI:456215"/>
    </ligand>
</feature>
<feature type="binding site" evidence="1">
    <location>
        <begin position="85"/>
        <end position="88"/>
    </location>
    <ligand>
        <name>AMP</name>
        <dbReference type="ChEBI" id="CHEBI:456215"/>
    </ligand>
</feature>
<feature type="binding site" evidence="1">
    <location>
        <position position="92"/>
    </location>
    <ligand>
        <name>AMP</name>
        <dbReference type="ChEBI" id="CHEBI:456215"/>
    </ligand>
</feature>
<feature type="binding site" evidence="1">
    <location>
        <position position="127"/>
    </location>
    <ligand>
        <name>ATP</name>
        <dbReference type="ChEBI" id="CHEBI:30616"/>
    </ligand>
</feature>
<feature type="binding site" evidence="1">
    <location>
        <position position="129"/>
    </location>
    <ligand>
        <name>AMP</name>
        <dbReference type="ChEBI" id="CHEBI:456215"/>
    </ligand>
</feature>
<feature type="binding site" evidence="1">
    <location>
        <position position="140"/>
    </location>
    <ligand>
        <name>AMP</name>
        <dbReference type="ChEBI" id="CHEBI:456215"/>
    </ligand>
</feature>
<feature type="binding site" evidence="1">
    <location>
        <position position="166"/>
    </location>
    <ligand>
        <name>ATP</name>
        <dbReference type="ChEBI" id="CHEBI:30616"/>
    </ligand>
</feature>
<proteinExistence type="inferred from homology"/>
<name>KAD_MYCBP</name>
<protein>
    <recommendedName>
        <fullName evidence="1">Adenylate kinase</fullName>
        <shortName evidence="1">AK</shortName>
        <ecNumber evidence="1">2.7.4.3</ecNumber>
    </recommendedName>
    <alternativeName>
        <fullName evidence="1">ATP-AMP transphosphorylase</fullName>
    </alternativeName>
    <alternativeName>
        <fullName evidence="1">ATP:AMP phosphotransferase</fullName>
    </alternativeName>
    <alternativeName>
        <fullName evidence="1">Adenylate monophosphate kinase</fullName>
    </alternativeName>
</protein>